<organism>
    <name type="scientific">Dendrocygna viduata</name>
    <name type="common">White-faced whistling-duck</name>
    <name type="synonym">Anas viduata</name>
    <dbReference type="NCBI Taxonomy" id="8876"/>
    <lineage>
        <taxon>Eukaryota</taxon>
        <taxon>Metazoa</taxon>
        <taxon>Chordata</taxon>
        <taxon>Craniata</taxon>
        <taxon>Vertebrata</taxon>
        <taxon>Euteleostomi</taxon>
        <taxon>Archelosauria</taxon>
        <taxon>Archosauria</taxon>
        <taxon>Dinosauria</taxon>
        <taxon>Saurischia</taxon>
        <taxon>Theropoda</taxon>
        <taxon>Coelurosauria</taxon>
        <taxon>Aves</taxon>
        <taxon>Neognathae</taxon>
        <taxon>Galloanserae</taxon>
        <taxon>Anseriformes</taxon>
        <taxon>Anatidae</taxon>
        <taxon>Dendrocygninae</taxon>
        <taxon>Dendrocygna</taxon>
    </lineage>
</organism>
<protein>
    <recommendedName>
        <fullName>Ovomucoid</fullName>
    </recommendedName>
</protein>
<accession>P05570</accession>
<evidence type="ECO:0000255" key="1">
    <source>
        <dbReference type="PROSITE-ProRule" id="PRU00798"/>
    </source>
</evidence>
<proteinExistence type="evidence at protein level"/>
<feature type="chain" id="PRO_0000073104" description="Ovomucoid">
    <location>
        <begin position="1" status="less than"/>
        <end position="54" status="greater than"/>
    </location>
</feature>
<feature type="domain" description="Kazal-like" evidence="1">
    <location>
        <begin position="4"/>
        <end position="54"/>
    </location>
</feature>
<feature type="site" description="Reactive bond 3">
    <location>
        <begin position="16"/>
        <end position="17"/>
    </location>
</feature>
<feature type="glycosylation site" description="N-linked (GlcNAc...) asparagine">
    <location>
        <position position="43"/>
    </location>
</feature>
<feature type="disulfide bond">
    <location>
        <begin position="6"/>
        <end position="36"/>
    </location>
</feature>
<feature type="disulfide bond">
    <location>
        <begin position="14"/>
        <end position="33"/>
    </location>
</feature>
<feature type="disulfide bond">
    <location>
        <begin position="22"/>
        <end position="54"/>
    </location>
</feature>
<feature type="non-terminal residue">
    <location>
        <position position="1"/>
    </location>
</feature>
<feature type="non-terminal residue">
    <location>
        <position position="54"/>
    </location>
</feature>
<name>IOVO_DENVD</name>
<dbReference type="PIR" id="H31446">
    <property type="entry name" value="H31446"/>
</dbReference>
<dbReference type="SMR" id="P05570"/>
<dbReference type="GO" id="GO:0005576">
    <property type="term" value="C:extracellular region"/>
    <property type="evidence" value="ECO:0007669"/>
    <property type="project" value="UniProtKB-SubCell"/>
</dbReference>
<dbReference type="GO" id="GO:0004867">
    <property type="term" value="F:serine-type endopeptidase inhibitor activity"/>
    <property type="evidence" value="ECO:0007669"/>
    <property type="project" value="UniProtKB-KW"/>
</dbReference>
<dbReference type="CDD" id="cd00104">
    <property type="entry name" value="KAZAL_FS"/>
    <property type="match status" value="1"/>
</dbReference>
<dbReference type="FunFam" id="3.30.60.30:FF:000037">
    <property type="entry name" value="Ovomucoid"/>
    <property type="match status" value="1"/>
</dbReference>
<dbReference type="Gene3D" id="3.30.60.30">
    <property type="match status" value="1"/>
</dbReference>
<dbReference type="InterPro" id="IPR050159">
    <property type="entry name" value="Kazal-type_SerProtInhib"/>
</dbReference>
<dbReference type="InterPro" id="IPR002350">
    <property type="entry name" value="Kazal_dom"/>
</dbReference>
<dbReference type="InterPro" id="IPR036058">
    <property type="entry name" value="Kazal_dom_sf"/>
</dbReference>
<dbReference type="InterPro" id="IPR001239">
    <property type="entry name" value="Prot_inh_Kazal-m"/>
</dbReference>
<dbReference type="PANTHER" id="PTHR47499:SF1">
    <property type="entry name" value="SERINE PROTEASE INHIBITOR KAZAL-TYPE 7"/>
    <property type="match status" value="1"/>
</dbReference>
<dbReference type="PANTHER" id="PTHR47499">
    <property type="entry name" value="SERINE PROTEASE INHIBITOR KAZAL-TYPE 7 SPINK7"/>
    <property type="match status" value="1"/>
</dbReference>
<dbReference type="Pfam" id="PF00050">
    <property type="entry name" value="Kazal_1"/>
    <property type="match status" value="1"/>
</dbReference>
<dbReference type="PRINTS" id="PR00290">
    <property type="entry name" value="KAZALINHBTR"/>
</dbReference>
<dbReference type="SMART" id="SM00280">
    <property type="entry name" value="KAZAL"/>
    <property type="match status" value="1"/>
</dbReference>
<dbReference type="SUPFAM" id="SSF100895">
    <property type="entry name" value="Kazal-type serine protease inhibitors"/>
    <property type="match status" value="1"/>
</dbReference>
<dbReference type="PROSITE" id="PS00282">
    <property type="entry name" value="KAZAL_1"/>
    <property type="match status" value="1"/>
</dbReference>
<dbReference type="PROSITE" id="PS51465">
    <property type="entry name" value="KAZAL_2"/>
    <property type="match status" value="1"/>
</dbReference>
<comment type="subcellular location">
    <subcellularLocation>
        <location>Secreted</location>
    </subcellularLocation>
</comment>
<comment type="domain">
    <text>Avian ovomucoid consists of three homologous, tandem Kazal family inhibitory domains.</text>
</comment>
<sequence length="54" mass="5826">VATVDCSDYPKPACTLEYMPLCGSDNKTYGNRCNFCNAVVDSNGTLTLSHFGKC</sequence>
<reference key="1">
    <citation type="journal article" date="1987" name="Biochemistry">
        <title>Ovomucoid third domains from 100 avian species: isolation, sequences, and hypervariability of enzyme-inhibitor contact residues.</title>
        <authorList>
            <person name="Laskowski M. Jr."/>
            <person name="Kato I."/>
            <person name="Ardelt W."/>
            <person name="Cook J."/>
            <person name="Denton A."/>
            <person name="Empie M.W."/>
            <person name="Kohr W.J."/>
            <person name="Park S.J."/>
            <person name="Parks K."/>
            <person name="Schatzley B.L."/>
            <person name="Schoenberger O.L."/>
            <person name="Tashiro M."/>
            <person name="Vichot G."/>
            <person name="Whatley H.E."/>
            <person name="Wieczorek A."/>
            <person name="Wieczorek M."/>
        </authorList>
    </citation>
    <scope>PROTEIN SEQUENCE</scope>
</reference>
<keyword id="KW-0903">Direct protein sequencing</keyword>
<keyword id="KW-1015">Disulfide bond</keyword>
<keyword id="KW-0325">Glycoprotein</keyword>
<keyword id="KW-0646">Protease inhibitor</keyword>
<keyword id="KW-0677">Repeat</keyword>
<keyword id="KW-0964">Secreted</keyword>
<keyword id="KW-0722">Serine protease inhibitor</keyword>